<reference evidence="5" key="1">
    <citation type="journal article" date="2006" name="Peptides">
        <title>Histamine-releasing and antimicrobial peptides from the skin secretions of the dusky gopher frog, Rana sevosa.</title>
        <authorList>
            <person name="Graham C."/>
            <person name="Richter S.C."/>
            <person name="McClean S."/>
            <person name="O'Kane E."/>
            <person name="Flatt P.R."/>
            <person name="Shaw C."/>
        </authorList>
    </citation>
    <scope>PROTEIN SEQUENCE</scope>
    <scope>FUNCTION</scope>
    <scope>SUBCELLULAR LOCATION</scope>
    <scope>TISSUE SPECIFICITY</scope>
    <scope>MASS SPECTROMETRY</scope>
    <source>
        <tissue evidence="3">Skin secretion</tissue>
    </source>
</reference>
<evidence type="ECO:0000250" key="1">
    <source>
        <dbReference type="UniProtKB" id="P32414"/>
    </source>
</evidence>
<evidence type="ECO:0000255" key="2"/>
<evidence type="ECO:0000269" key="3">
    <source>
    </source>
</evidence>
<evidence type="ECO:0000303" key="4">
    <source>
    </source>
</evidence>
<evidence type="ECO:0000305" key="5"/>
<sequence length="46" mass="4940">GLFSKFNKKKIKSGLFKIIKTAGKEAGLEALRTGIDVIGCKIKGEC</sequence>
<keyword id="KW-0878">Amphibian defense peptide</keyword>
<keyword id="KW-0044">Antibiotic</keyword>
<keyword id="KW-0929">Antimicrobial</keyword>
<keyword id="KW-0903">Direct protein sequencing</keyword>
<keyword id="KW-1015">Disulfide bond</keyword>
<keyword id="KW-0395">Inflammatory response</keyword>
<keyword id="KW-0467">Mast cell degranulation</keyword>
<keyword id="KW-0964">Secreted</keyword>
<accession>P85054</accession>
<organism>
    <name type="scientific">Lithobates sevosus</name>
    <name type="common">Dusky gopher frog</name>
    <name type="synonym">Rana sevosa</name>
    <dbReference type="NCBI Taxonomy" id="299683"/>
    <lineage>
        <taxon>Eukaryota</taxon>
        <taxon>Metazoa</taxon>
        <taxon>Chordata</taxon>
        <taxon>Craniata</taxon>
        <taxon>Vertebrata</taxon>
        <taxon>Euteleostomi</taxon>
        <taxon>Amphibia</taxon>
        <taxon>Batrachia</taxon>
        <taxon>Anura</taxon>
        <taxon>Neobatrachia</taxon>
        <taxon>Ranoidea</taxon>
        <taxon>Ranidae</taxon>
        <taxon>Lithobates</taxon>
    </lineage>
</organism>
<protein>
    <recommendedName>
        <fullName evidence="4">Esculentin-1SEb</fullName>
    </recommendedName>
</protein>
<proteinExistence type="evidence at protein level"/>
<feature type="peptide" id="PRO_0000271245" description="Esculentin-1SEb">
    <location>
        <begin position="1"/>
        <end position="46"/>
    </location>
</feature>
<feature type="disulfide bond" evidence="1">
    <location>
        <begin position="40"/>
        <end position="46"/>
    </location>
</feature>
<name>ES1SB_LITSE</name>
<comment type="function">
    <text evidence="3">Mast cell degranulating peptide. Causes histamine release from rat peritoneal mast cells in vitro. Has antibacterial activity against the Gram-negative bacterium E.coli K12 and Gram-positive bacterium M.luteus NCT C2665.</text>
</comment>
<comment type="subcellular location">
    <subcellularLocation>
        <location evidence="3">Secreted</location>
    </subcellularLocation>
</comment>
<comment type="tissue specificity">
    <text evidence="3">Expressed by the skin glands.</text>
</comment>
<comment type="mass spectrometry" mass="4903.0" method="MALDI" evidence="3"/>
<comment type="mass spectrometry" mass="4903.0" method="Electrospray" evidence="3"/>
<comment type="similarity">
    <text evidence="2">Belongs to the frog skin active peptide (FSAP) family. Esculentin subfamily.</text>
</comment>
<comment type="online information" name="The antimicrobial peptide database">
    <link uri="https://wangapd3.com/database/query_output.php?ID=00604"/>
</comment>
<dbReference type="SMR" id="P85054"/>
<dbReference type="GO" id="GO:0005576">
    <property type="term" value="C:extracellular region"/>
    <property type="evidence" value="ECO:0000314"/>
    <property type="project" value="UniProtKB"/>
</dbReference>
<dbReference type="GO" id="GO:0050829">
    <property type="term" value="P:defense response to Gram-negative bacterium"/>
    <property type="evidence" value="ECO:0000314"/>
    <property type="project" value="UniProtKB"/>
</dbReference>
<dbReference type="GO" id="GO:0050830">
    <property type="term" value="P:defense response to Gram-positive bacterium"/>
    <property type="evidence" value="ECO:0000314"/>
    <property type="project" value="UniProtKB"/>
</dbReference>
<dbReference type="GO" id="GO:0002553">
    <property type="term" value="P:histamine secretion by mast cell"/>
    <property type="evidence" value="ECO:0000314"/>
    <property type="project" value="UniProtKB"/>
</dbReference>
<dbReference type="GO" id="GO:0043306">
    <property type="term" value="P:positive regulation of mast cell degranulation"/>
    <property type="evidence" value="ECO:0000314"/>
    <property type="project" value="UniProtKB"/>
</dbReference>